<keyword id="KW-0075">B-cell activation</keyword>
<keyword id="KW-0963">Cytoplasm</keyword>
<keyword id="KW-0597">Phosphoprotein</keyword>
<keyword id="KW-1185">Reference proteome</keyword>
<keyword id="KW-0728">SH3 domain</keyword>
<accession>Q920G0</accession>
<gene>
    <name type="primary">Skap2</name>
    <name type="synonym">Scap2</name>
    <name type="synonym">Skap55r</name>
</gene>
<protein>
    <recommendedName>
        <fullName>Src kinase-associated phosphoprotein 2</fullName>
    </recommendedName>
    <alternativeName>
        <fullName>SKAP55 homolog</fullName>
        <shortName>SKAP-55HOM</shortName>
        <shortName>SKAP-HOM</shortName>
        <shortName>SKAP55-HOM</shortName>
    </alternativeName>
    <alternativeName>
        <fullName>Src family-associated phosphoprotein 2</fullName>
    </alternativeName>
    <alternativeName>
        <fullName>Src kinase-associated phosphoprotein 55-related protein</fullName>
    </alternativeName>
</protein>
<dbReference type="EMBL" id="AF302132">
    <property type="protein sequence ID" value="AAK97262.1"/>
    <property type="molecule type" value="mRNA"/>
</dbReference>
<dbReference type="EMBL" id="BC070949">
    <property type="protein sequence ID" value="AAH70949.1"/>
    <property type="molecule type" value="mRNA"/>
</dbReference>
<dbReference type="RefSeq" id="NP_569097.1">
    <property type="nucleotide sequence ID" value="NM_130413.1"/>
</dbReference>
<dbReference type="RefSeq" id="XP_006236539.1">
    <property type="nucleotide sequence ID" value="XM_006236477.5"/>
</dbReference>
<dbReference type="RefSeq" id="XP_006236540.1">
    <property type="nucleotide sequence ID" value="XM_006236478.5"/>
</dbReference>
<dbReference type="SMR" id="Q920G0"/>
<dbReference type="FunCoup" id="Q920G0">
    <property type="interactions" value="598"/>
</dbReference>
<dbReference type="STRING" id="10116.ENSRNOP00000016608"/>
<dbReference type="iPTMnet" id="Q920G0"/>
<dbReference type="PhosphoSitePlus" id="Q920G0"/>
<dbReference type="PaxDb" id="10116-ENSRNOP00000016608"/>
<dbReference type="Ensembl" id="ENSRNOT00000016608.3">
    <property type="protein sequence ID" value="ENSRNOP00000016608.2"/>
    <property type="gene ID" value="ENSRNOG00000012228.3"/>
</dbReference>
<dbReference type="GeneID" id="155183"/>
<dbReference type="KEGG" id="rno:155183"/>
<dbReference type="AGR" id="RGD:620159"/>
<dbReference type="CTD" id="8935"/>
<dbReference type="RGD" id="620159">
    <property type="gene designation" value="Skap2"/>
</dbReference>
<dbReference type="eggNOG" id="ENOG502QVFD">
    <property type="taxonomic scope" value="Eukaryota"/>
</dbReference>
<dbReference type="GeneTree" id="ENSGT00390000017856"/>
<dbReference type="HOGENOM" id="CLU_062032_0_0_1"/>
<dbReference type="InParanoid" id="Q920G0"/>
<dbReference type="OMA" id="ASDRCDK"/>
<dbReference type="OrthoDB" id="243840at2759"/>
<dbReference type="PhylomeDB" id="Q920G0"/>
<dbReference type="TreeFam" id="TF331055"/>
<dbReference type="Reactome" id="R-RNO-391160">
    <property type="pathway name" value="Signal regulatory protein family interactions"/>
</dbReference>
<dbReference type="PRO" id="PR:Q920G0"/>
<dbReference type="Proteomes" id="UP000002494">
    <property type="component" value="Chromosome 4"/>
</dbReference>
<dbReference type="Bgee" id="ENSRNOG00000012228">
    <property type="expression patterns" value="Expressed in lung and 19 other cell types or tissues"/>
</dbReference>
<dbReference type="GO" id="GO:0005737">
    <property type="term" value="C:cytoplasm"/>
    <property type="evidence" value="ECO:0000266"/>
    <property type="project" value="RGD"/>
</dbReference>
<dbReference type="GO" id="GO:0005886">
    <property type="term" value="C:plasma membrane"/>
    <property type="evidence" value="ECO:0000266"/>
    <property type="project" value="RGD"/>
</dbReference>
<dbReference type="GO" id="GO:0042113">
    <property type="term" value="P:B cell activation"/>
    <property type="evidence" value="ECO:0007669"/>
    <property type="project" value="UniProtKB-KW"/>
</dbReference>
<dbReference type="GO" id="GO:0008285">
    <property type="term" value="P:negative regulation of cell population proliferation"/>
    <property type="evidence" value="ECO:0000266"/>
    <property type="project" value="RGD"/>
</dbReference>
<dbReference type="CDD" id="cd13381">
    <property type="entry name" value="PH_Skap-hom_Skap2"/>
    <property type="match status" value="1"/>
</dbReference>
<dbReference type="FunFam" id="2.30.29.30:FF:000194">
    <property type="entry name" value="Putative src kinase-associated phosphoprotein 2"/>
    <property type="match status" value="1"/>
</dbReference>
<dbReference type="FunFam" id="2.30.30.40:FF:000097">
    <property type="entry name" value="Putative src kinase-associated phosphoprotein 2"/>
    <property type="match status" value="1"/>
</dbReference>
<dbReference type="Gene3D" id="6.10.250.220">
    <property type="match status" value="1"/>
</dbReference>
<dbReference type="Gene3D" id="2.30.29.30">
    <property type="entry name" value="Pleckstrin-homology domain (PH domain)/Phosphotyrosine-binding domain (PTB)"/>
    <property type="match status" value="1"/>
</dbReference>
<dbReference type="Gene3D" id="2.30.30.40">
    <property type="entry name" value="SH3 Domains"/>
    <property type="match status" value="1"/>
</dbReference>
<dbReference type="InterPro" id="IPR011993">
    <property type="entry name" value="PH-like_dom_sf"/>
</dbReference>
<dbReference type="InterPro" id="IPR001849">
    <property type="entry name" value="PH_domain"/>
</dbReference>
<dbReference type="InterPro" id="IPR036028">
    <property type="entry name" value="SH3-like_dom_sf"/>
</dbReference>
<dbReference type="InterPro" id="IPR001452">
    <property type="entry name" value="SH3_domain"/>
</dbReference>
<dbReference type="InterPro" id="IPR037781">
    <property type="entry name" value="SKAP_fam"/>
</dbReference>
<dbReference type="PANTHER" id="PTHR15129:SF2">
    <property type="entry name" value="SRC KINASE-ASSOCIATED PHOSPHOPROTEIN 2"/>
    <property type="match status" value="1"/>
</dbReference>
<dbReference type="PANTHER" id="PTHR15129">
    <property type="entry name" value="SRC-ASSOCIATED ADAPTOR PROTEIN"/>
    <property type="match status" value="1"/>
</dbReference>
<dbReference type="Pfam" id="PF00169">
    <property type="entry name" value="PH"/>
    <property type="match status" value="1"/>
</dbReference>
<dbReference type="Pfam" id="PF00018">
    <property type="entry name" value="SH3_1"/>
    <property type="match status" value="1"/>
</dbReference>
<dbReference type="PRINTS" id="PR00452">
    <property type="entry name" value="SH3DOMAIN"/>
</dbReference>
<dbReference type="SMART" id="SM00233">
    <property type="entry name" value="PH"/>
    <property type="match status" value="1"/>
</dbReference>
<dbReference type="SMART" id="SM00326">
    <property type="entry name" value="SH3"/>
    <property type="match status" value="1"/>
</dbReference>
<dbReference type="SUPFAM" id="SSF50729">
    <property type="entry name" value="PH domain-like"/>
    <property type="match status" value="1"/>
</dbReference>
<dbReference type="SUPFAM" id="SSF50044">
    <property type="entry name" value="SH3-domain"/>
    <property type="match status" value="1"/>
</dbReference>
<dbReference type="PROSITE" id="PS50003">
    <property type="entry name" value="PH_DOMAIN"/>
    <property type="match status" value="1"/>
</dbReference>
<dbReference type="PROSITE" id="PS50002">
    <property type="entry name" value="SH3"/>
    <property type="match status" value="1"/>
</dbReference>
<proteinExistence type="evidence at protein level"/>
<reference key="1">
    <citation type="submission" date="2000-09" db="EMBL/GenBank/DDBJ databases">
        <title>Src kinase-associated phosphoprotein homolog (SKAP55-HOM) in signaling from the high affinity IgE receptor aggregation.</title>
        <authorList>
            <person name="Sada K."/>
            <person name="Hong S."/>
            <person name="Siraganian R."/>
        </authorList>
    </citation>
    <scope>NUCLEOTIDE SEQUENCE [MRNA]</scope>
    <source>
        <strain>Wistar</strain>
    </source>
</reference>
<reference key="2">
    <citation type="submission" date="2004-05" db="EMBL/GenBank/DDBJ databases">
        <authorList>
            <consortium name="NIH - Mammalian Gene Collection (MGC) project"/>
        </authorList>
    </citation>
    <scope>NUCLEOTIDE SEQUENCE [LARGE SCALE MRNA]</scope>
    <source>
        <tissue>Lung</tissue>
    </source>
</reference>
<reference key="3">
    <citation type="journal article" date="2012" name="Nat. Commun.">
        <title>Quantitative maps of protein phosphorylation sites across 14 different rat organs and tissues.</title>
        <authorList>
            <person name="Lundby A."/>
            <person name="Secher A."/>
            <person name="Lage K."/>
            <person name="Nordsborg N.B."/>
            <person name="Dmytriyev A."/>
            <person name="Lundby C."/>
            <person name="Olsen J.V."/>
        </authorList>
    </citation>
    <scope>PHOSPHORYLATION [LARGE SCALE ANALYSIS] AT SER-6; SER-9; SER-87; SER-90; SER-223; SER-272; SER-282 AND SER-285</scope>
    <scope>IDENTIFICATION BY MASS SPECTROMETRY [LARGE SCALE ANALYSIS]</scope>
</reference>
<name>SKAP2_RAT</name>
<comment type="function">
    <text evidence="1">May be involved in B-cell and macrophage adhesion processes. In B-cells, may act by coupling the B-cell receptor (BCR) to integrin activation. May play a role in src signaling pathway (By similarity).</text>
</comment>
<comment type="subunit">
    <text evidence="1">Interacts with FYB1, which is required for SKAP2 protein stability. Interacts with PTPNS1. Part of a complex consisting of SKAP2, FYB1 and PTPNS1. Part of a complex consisting of SKAP2, FYB1 and LILRB3. Interacts with LAT, GRB2, PTK2B, and PRAM1. May interact with actin. May interact with FYN, HCK and LYN. Interacts with FASLG (By similarity).</text>
</comment>
<comment type="subcellular location">
    <subcellularLocation>
        <location evidence="1">Cytoplasm</location>
    </subcellularLocation>
</comment>
<comment type="domain">
    <text evidence="1">The SH3 domain interacts with FYB1 and PTK2B.</text>
</comment>
<comment type="similarity">
    <text evidence="7">Belongs to the SKAP family.</text>
</comment>
<sequence length="358" mass="40717">MPNPGSTSSPGSIPEEIRNLLADVETFVADTLKGENLSKKAKEKRDSLIKKIKDVKSVYPQEFQDKGDAEEGDEYDDPFAGPPDTISLASERYDKDDDGPSDGNQFPPIAAQDLSFVIKAGYLEKRRKDHSFLGFEWQKRWCALSKTVFYYYGSDKDKQQKGEFAIEGYDVRMNNTLRKDAKKDCCFEICAPDKRIYQFTAASPKDAEEWVQQLKFILQDMGSDVIPEDEDEKGDLYDDVDHPVPVSSPQRSQPIDDEIYEELPEEEEDTASVKMDEQGKGSRDSVQHPSGDKSTDYANFYQGLWDCTGSLSDELSFKRGDVIYILSKEYNRYGWWVGEMQGAIGLVPKAYLMEMYDI</sequence>
<organism>
    <name type="scientific">Rattus norvegicus</name>
    <name type="common">Rat</name>
    <dbReference type="NCBI Taxonomy" id="10116"/>
    <lineage>
        <taxon>Eukaryota</taxon>
        <taxon>Metazoa</taxon>
        <taxon>Chordata</taxon>
        <taxon>Craniata</taxon>
        <taxon>Vertebrata</taxon>
        <taxon>Euteleostomi</taxon>
        <taxon>Mammalia</taxon>
        <taxon>Eutheria</taxon>
        <taxon>Euarchontoglires</taxon>
        <taxon>Glires</taxon>
        <taxon>Rodentia</taxon>
        <taxon>Myomorpha</taxon>
        <taxon>Muroidea</taxon>
        <taxon>Muridae</taxon>
        <taxon>Murinae</taxon>
        <taxon>Rattus</taxon>
    </lineage>
</organism>
<feature type="chain" id="PRO_0000270182" description="Src kinase-associated phosphoprotein 2">
    <location>
        <begin position="1"/>
        <end position="358"/>
    </location>
</feature>
<feature type="domain" description="PH" evidence="4">
    <location>
        <begin position="116"/>
        <end position="219"/>
    </location>
</feature>
<feature type="domain" description="SH3" evidence="5">
    <location>
        <begin position="296"/>
        <end position="357"/>
    </location>
</feature>
<feature type="region of interest" description="Disordered" evidence="6">
    <location>
        <begin position="60"/>
        <end position="108"/>
    </location>
</feature>
<feature type="region of interest" description="Disordered" evidence="6">
    <location>
        <begin position="227"/>
        <end position="293"/>
    </location>
</feature>
<feature type="compositionally biased region" description="Low complexity" evidence="6">
    <location>
        <begin position="243"/>
        <end position="253"/>
    </location>
</feature>
<feature type="compositionally biased region" description="Acidic residues" evidence="6">
    <location>
        <begin position="255"/>
        <end position="270"/>
    </location>
</feature>
<feature type="compositionally biased region" description="Basic and acidic residues" evidence="6">
    <location>
        <begin position="274"/>
        <end position="293"/>
    </location>
</feature>
<feature type="modified residue" description="Phosphoserine" evidence="8">
    <location>
        <position position="6"/>
    </location>
</feature>
<feature type="modified residue" description="Phosphoserine" evidence="8">
    <location>
        <position position="9"/>
    </location>
</feature>
<feature type="modified residue" description="Phosphotyrosine" evidence="2">
    <location>
        <position position="75"/>
    </location>
</feature>
<feature type="modified residue" description="Phosphoserine" evidence="8">
    <location>
        <position position="87"/>
    </location>
</feature>
<feature type="modified residue" description="Phosphoserine" evidence="8">
    <location>
        <position position="90"/>
    </location>
</feature>
<feature type="modified residue" description="Phosphotyrosine" evidence="3">
    <location>
        <position position="151"/>
    </location>
</feature>
<feature type="modified residue" description="Phosphotyrosine" evidence="2">
    <location>
        <position position="197"/>
    </location>
</feature>
<feature type="modified residue" description="Phosphoserine" evidence="8">
    <location>
        <position position="223"/>
    </location>
</feature>
<feature type="modified residue" description="Phosphotyrosine" evidence="3">
    <location>
        <position position="260"/>
    </location>
</feature>
<feature type="modified residue" description="Phosphoserine" evidence="8">
    <location>
        <position position="272"/>
    </location>
</feature>
<feature type="modified residue" description="Phosphoserine" evidence="8">
    <location>
        <position position="282"/>
    </location>
</feature>
<feature type="modified residue" description="Phosphoserine" evidence="8">
    <location>
        <position position="285"/>
    </location>
</feature>
<evidence type="ECO:0000250" key="1"/>
<evidence type="ECO:0000250" key="2">
    <source>
        <dbReference type="UniProtKB" id="O75563"/>
    </source>
</evidence>
<evidence type="ECO:0000250" key="3">
    <source>
        <dbReference type="UniProtKB" id="Q3UND0"/>
    </source>
</evidence>
<evidence type="ECO:0000255" key="4">
    <source>
        <dbReference type="PROSITE-ProRule" id="PRU00145"/>
    </source>
</evidence>
<evidence type="ECO:0000255" key="5">
    <source>
        <dbReference type="PROSITE-ProRule" id="PRU00192"/>
    </source>
</evidence>
<evidence type="ECO:0000256" key="6">
    <source>
        <dbReference type="SAM" id="MobiDB-lite"/>
    </source>
</evidence>
<evidence type="ECO:0000305" key="7"/>
<evidence type="ECO:0007744" key="8">
    <source>
    </source>
</evidence>